<reference key="1">
    <citation type="journal article" date="2003" name="Nature">
        <title>Genome sequence of Bacillus cereus and comparative analysis with Bacillus anthracis.</title>
        <authorList>
            <person name="Ivanova N."/>
            <person name="Sorokin A."/>
            <person name="Anderson I."/>
            <person name="Galleron N."/>
            <person name="Candelon B."/>
            <person name="Kapatral V."/>
            <person name="Bhattacharyya A."/>
            <person name="Reznik G."/>
            <person name="Mikhailova N."/>
            <person name="Lapidus A."/>
            <person name="Chu L."/>
            <person name="Mazur M."/>
            <person name="Goltsman E."/>
            <person name="Larsen N."/>
            <person name="D'Souza M."/>
            <person name="Walunas T."/>
            <person name="Grechkin Y."/>
            <person name="Pusch G."/>
            <person name="Haselkorn R."/>
            <person name="Fonstein M."/>
            <person name="Ehrlich S.D."/>
            <person name="Overbeek R."/>
            <person name="Kyrpides N.C."/>
        </authorList>
    </citation>
    <scope>NUCLEOTIDE SEQUENCE [LARGE SCALE GENOMIC DNA]</scope>
    <source>
        <strain>ATCC 14579 / DSM 31 / CCUG 7414 / JCM 2152 / NBRC 15305 / NCIMB 9373 / NCTC 2599 / NRRL B-3711</strain>
    </source>
</reference>
<dbReference type="EMBL" id="AE016877">
    <property type="protein sequence ID" value="AAP11576.1"/>
    <property type="molecule type" value="Genomic_DNA"/>
</dbReference>
<dbReference type="RefSeq" id="NP_834375.1">
    <property type="nucleotide sequence ID" value="NC_004722.1"/>
</dbReference>
<dbReference type="RefSeq" id="WP_000267011.1">
    <property type="nucleotide sequence ID" value="NZ_CP138336.1"/>
</dbReference>
<dbReference type="SMR" id="Q816Z0"/>
<dbReference type="STRING" id="226900.BC_4669"/>
<dbReference type="KEGG" id="bce:BC4669"/>
<dbReference type="PATRIC" id="fig|226900.8.peg.4834"/>
<dbReference type="HOGENOM" id="CLU_095787_0_0_9"/>
<dbReference type="OrthoDB" id="9810350at2"/>
<dbReference type="Proteomes" id="UP000001417">
    <property type="component" value="Chromosome"/>
</dbReference>
<dbReference type="GO" id="GO:0016020">
    <property type="term" value="C:membrane"/>
    <property type="evidence" value="ECO:0000318"/>
    <property type="project" value="GO_Central"/>
</dbReference>
<dbReference type="GO" id="GO:0005886">
    <property type="term" value="C:plasma membrane"/>
    <property type="evidence" value="ECO:0007669"/>
    <property type="project" value="UniProtKB-SubCell"/>
</dbReference>
<dbReference type="GO" id="GO:0008381">
    <property type="term" value="F:mechanosensitive monoatomic ion channel activity"/>
    <property type="evidence" value="ECO:0000318"/>
    <property type="project" value="GO_Central"/>
</dbReference>
<dbReference type="GO" id="GO:0006811">
    <property type="term" value="P:monoatomic ion transport"/>
    <property type="evidence" value="ECO:0000318"/>
    <property type="project" value="GO_Central"/>
</dbReference>
<dbReference type="FunFam" id="1.10.1200.120:FF:000001">
    <property type="entry name" value="Large-conductance mechanosensitive channel"/>
    <property type="match status" value="1"/>
</dbReference>
<dbReference type="Gene3D" id="1.10.1200.120">
    <property type="entry name" value="Large-conductance mechanosensitive channel, MscL, domain 1"/>
    <property type="match status" value="1"/>
</dbReference>
<dbReference type="HAMAP" id="MF_00115">
    <property type="entry name" value="MscL"/>
    <property type="match status" value="1"/>
</dbReference>
<dbReference type="InterPro" id="IPR019823">
    <property type="entry name" value="Mechanosensitive_channel_CS"/>
</dbReference>
<dbReference type="InterPro" id="IPR001185">
    <property type="entry name" value="MS_channel"/>
</dbReference>
<dbReference type="InterPro" id="IPR037673">
    <property type="entry name" value="MSC/AndL"/>
</dbReference>
<dbReference type="InterPro" id="IPR036019">
    <property type="entry name" value="MscL_channel"/>
</dbReference>
<dbReference type="NCBIfam" id="TIGR00220">
    <property type="entry name" value="mscL"/>
    <property type="match status" value="1"/>
</dbReference>
<dbReference type="NCBIfam" id="NF001843">
    <property type="entry name" value="PRK00567.1-4"/>
    <property type="match status" value="1"/>
</dbReference>
<dbReference type="NCBIfam" id="NF010560">
    <property type="entry name" value="PRK13955.1"/>
    <property type="match status" value="1"/>
</dbReference>
<dbReference type="PANTHER" id="PTHR30266:SF2">
    <property type="entry name" value="LARGE-CONDUCTANCE MECHANOSENSITIVE CHANNEL"/>
    <property type="match status" value="1"/>
</dbReference>
<dbReference type="PANTHER" id="PTHR30266">
    <property type="entry name" value="MECHANOSENSITIVE CHANNEL MSCL"/>
    <property type="match status" value="1"/>
</dbReference>
<dbReference type="Pfam" id="PF01741">
    <property type="entry name" value="MscL"/>
    <property type="match status" value="1"/>
</dbReference>
<dbReference type="PRINTS" id="PR01264">
    <property type="entry name" value="MECHCHANNEL"/>
</dbReference>
<dbReference type="SUPFAM" id="SSF81330">
    <property type="entry name" value="Gated mechanosensitive channel"/>
    <property type="match status" value="1"/>
</dbReference>
<dbReference type="PROSITE" id="PS01327">
    <property type="entry name" value="MSCL"/>
    <property type="match status" value="1"/>
</dbReference>
<comment type="function">
    <text evidence="1">Channel that opens in response to stretch forces in the membrane lipid bilayer. May participate in the regulation of osmotic pressure changes within the cell.</text>
</comment>
<comment type="subunit">
    <text evidence="1">Homopentamer.</text>
</comment>
<comment type="subcellular location">
    <subcellularLocation>
        <location evidence="1">Cell membrane</location>
        <topology evidence="1">Multi-pass membrane protein</topology>
    </subcellularLocation>
</comment>
<comment type="similarity">
    <text evidence="1">Belongs to the MscL family.</text>
</comment>
<gene>
    <name evidence="1" type="primary">mscL</name>
    <name type="ordered locus">BC_4669</name>
</gene>
<organism>
    <name type="scientific">Bacillus cereus (strain ATCC 14579 / DSM 31 / CCUG 7414 / JCM 2152 / NBRC 15305 / NCIMB 9373 / NCTC 2599 / NRRL B-3711)</name>
    <dbReference type="NCBI Taxonomy" id="226900"/>
    <lineage>
        <taxon>Bacteria</taxon>
        <taxon>Bacillati</taxon>
        <taxon>Bacillota</taxon>
        <taxon>Bacilli</taxon>
        <taxon>Bacillales</taxon>
        <taxon>Bacillaceae</taxon>
        <taxon>Bacillus</taxon>
        <taxon>Bacillus cereus group</taxon>
    </lineage>
</organism>
<name>MSCL_BACCR</name>
<feature type="chain" id="PRO_0000237971" description="Large-conductance mechanosensitive channel">
    <location>
        <begin position="1"/>
        <end position="132"/>
    </location>
</feature>
<feature type="transmembrane region" description="Helical" evidence="1">
    <location>
        <begin position="14"/>
        <end position="34"/>
    </location>
</feature>
<feature type="transmembrane region" description="Helical" evidence="1">
    <location>
        <begin position="38"/>
        <end position="58"/>
    </location>
</feature>
<feature type="transmembrane region" description="Helical" evidence="1">
    <location>
        <begin position="67"/>
        <end position="87"/>
    </location>
</feature>
<proteinExistence type="inferred from homology"/>
<keyword id="KW-1003">Cell membrane</keyword>
<keyword id="KW-0407">Ion channel</keyword>
<keyword id="KW-0406">Ion transport</keyword>
<keyword id="KW-0472">Membrane</keyword>
<keyword id="KW-1185">Reference proteome</keyword>
<keyword id="KW-0812">Transmembrane</keyword>
<keyword id="KW-1133">Transmembrane helix</keyword>
<keyword id="KW-0813">Transport</keyword>
<accession>Q816Z0</accession>
<protein>
    <recommendedName>
        <fullName evidence="1">Large-conductance mechanosensitive channel</fullName>
    </recommendedName>
</protein>
<sequence>MWNEFKKFAFKGNVVDLAVGVVIGAAFGKIVSSLVKDIITPLLGMVLGGVDFTSLHFGYGKSAVMYGNFIQTIFDFLIIAASIFMFVKVFNKLTSKKEEEKEEEIPEPTKEEELLGEIRDLLKQQNSSKDRA</sequence>
<evidence type="ECO:0000255" key="1">
    <source>
        <dbReference type="HAMAP-Rule" id="MF_00115"/>
    </source>
</evidence>